<feature type="chain" id="PRO_0000452545" description="Bacterial microcompartment protein homohexamer">
    <location>
        <begin position="1"/>
        <end position="99"/>
    </location>
</feature>
<feature type="domain" description="BMC" evidence="1">
    <location>
        <begin position="4"/>
        <end position="88"/>
    </location>
</feature>
<feature type="mutagenesis site" description="Forms larger hexamer patches, increases hexamer stacking." evidence="3">
    <original>K</original>
    <variation>A</variation>
    <location>
        <position position="28"/>
    </location>
</feature>
<feature type="mutagenesis site" description="Forms smaller hexamer patches." evidence="3">
    <original>R</original>
    <variation>A</variation>
    <location>
        <position position="78"/>
    </location>
</feature>
<feature type="strand" evidence="22">
    <location>
        <begin position="4"/>
        <end position="11"/>
    </location>
</feature>
<feature type="helix" evidence="22">
    <location>
        <begin position="13"/>
        <end position="26"/>
    </location>
</feature>
<feature type="strand" evidence="22">
    <location>
        <begin position="27"/>
        <end position="38"/>
    </location>
</feature>
<feature type="strand" evidence="22">
    <location>
        <begin position="41"/>
        <end position="48"/>
    </location>
</feature>
<feature type="helix" evidence="22">
    <location>
        <begin position="50"/>
        <end position="66"/>
    </location>
</feature>
<feature type="strand" evidence="22">
    <location>
        <begin position="71"/>
        <end position="78"/>
    </location>
</feature>
<feature type="helix" evidence="22">
    <location>
        <begin position="81"/>
        <end position="86"/>
    </location>
</feature>
<feature type="strand" evidence="22">
    <location>
        <begin position="96"/>
        <end position="98"/>
    </location>
</feature>
<gene>
    <name type="ordered locus">Hoch_5815</name>
</gene>
<sequence length="99" mass="10114">MADALGMIEVRGFVGMVEAADAMVKAAKVELIGYEKTGGGYVTAVVRGDVAAVKAATEAGQRAAERVGEVVAVHVIPRPHVNVDAALPLGRTPGMDKSA</sequence>
<proteinExistence type="evidence at protein level"/>
<evidence type="ECO:0000255" key="1">
    <source>
        <dbReference type="PROSITE-ProRule" id="PRU01278"/>
    </source>
</evidence>
<evidence type="ECO:0000269" key="2">
    <source>
    </source>
</evidence>
<evidence type="ECO:0000269" key="3">
    <source>
    </source>
</evidence>
<evidence type="ECO:0000269" key="4">
    <source>
    </source>
</evidence>
<evidence type="ECO:0000269" key="5">
    <source>
    </source>
</evidence>
<evidence type="ECO:0000269" key="6">
    <source>
    </source>
</evidence>
<evidence type="ECO:0000269" key="7">
    <source>
    </source>
</evidence>
<evidence type="ECO:0000303" key="8">
    <source>
    </source>
</evidence>
<evidence type="ECO:0000305" key="9">
    <source>
    </source>
</evidence>
<evidence type="ECO:0007744" key="10">
    <source>
        <dbReference type="PDB" id="5DJB"/>
    </source>
</evidence>
<evidence type="ECO:0007744" key="11">
    <source>
        <dbReference type="PDB" id="5V74"/>
    </source>
</evidence>
<evidence type="ECO:0007744" key="12">
    <source>
        <dbReference type="PDB" id="6MZU"/>
    </source>
</evidence>
<evidence type="ECO:0007744" key="13">
    <source>
        <dbReference type="PDB" id="6MZV"/>
    </source>
</evidence>
<evidence type="ECO:0007744" key="14">
    <source>
        <dbReference type="PDB" id="6MZX"/>
    </source>
</evidence>
<evidence type="ECO:0007744" key="15">
    <source>
        <dbReference type="PDB" id="6N06"/>
    </source>
</evidence>
<evidence type="ECO:0007744" key="16">
    <source>
        <dbReference type="PDB" id="6N07"/>
    </source>
</evidence>
<evidence type="ECO:0007744" key="17">
    <source>
        <dbReference type="PDB" id="6N09"/>
    </source>
</evidence>
<evidence type="ECO:0007744" key="18">
    <source>
        <dbReference type="PDB" id="6N0F"/>
    </source>
</evidence>
<evidence type="ECO:0007744" key="19">
    <source>
        <dbReference type="PDB" id="6N0G"/>
    </source>
</evidence>
<evidence type="ECO:0007744" key="20">
    <source>
        <dbReference type="PDB" id="6NER"/>
    </source>
</evidence>
<evidence type="ECO:0007744" key="21">
    <source>
        <dbReference type="PDB" id="6NLU"/>
    </source>
</evidence>
<evidence type="ECO:0007829" key="22">
    <source>
        <dbReference type="PDB" id="6NLU"/>
    </source>
</evidence>
<dbReference type="EMBL" id="CP001804">
    <property type="protein sequence ID" value="ACY18291.1"/>
    <property type="molecule type" value="Genomic_DNA"/>
</dbReference>
<dbReference type="PDB" id="5DJB">
    <property type="method" value="X-ray"/>
    <property type="resolution" value="1.80 A"/>
    <property type="chains" value="A/B/C/D/E/F/G/H=1-99"/>
</dbReference>
<dbReference type="PDB" id="5V74">
    <property type="method" value="X-ray"/>
    <property type="resolution" value="3.51 A"/>
    <property type="chains" value="12/13/14/15/16/17/22/23/24/25/26/27/32/33/34/35/36/37/42/43/44/45/46/47/A2/A3/A4/A5/A6/A7=1-99"/>
</dbReference>
<dbReference type="PDB" id="6MZU">
    <property type="method" value="EM"/>
    <property type="resolution" value="3.40 A"/>
    <property type="chains" value="GA/GB/GC/GD/GE/GF/HA/HB/HC/HD/HE/HF/IA/IB/IC/ID/IE/IF/JA/JB/JC/JD/JE/JF/KA/KB/KC/KD/KE/KF=1-99"/>
</dbReference>
<dbReference type="PDB" id="6MZV">
    <property type="method" value="EM"/>
    <property type="resolution" value="3.40 A"/>
    <property type="chains" value="GA/GB/GC/GD/GE/GF/HA/HB/HC/HD/HE/HF/IA/IB/IC/ID/IE/IF/JA/JB/JC/JD/JE/JF/KA/KB/KC/KD/KE/KF=1-99"/>
</dbReference>
<dbReference type="PDB" id="6MZX">
    <property type="method" value="EM"/>
    <property type="resolution" value="3.00 A"/>
    <property type="chains" value="A2/A3/A4/A5/A6/A7=1-99"/>
</dbReference>
<dbReference type="PDB" id="6MZY">
    <property type="method" value="EM"/>
    <property type="resolution" value="3.30 A"/>
    <property type="chains" value="A2/A3/A4/A5/A6/A7=1-99"/>
</dbReference>
<dbReference type="PDB" id="6N06">
    <property type="method" value="EM"/>
    <property type="resolution" value="3.40 A"/>
    <property type="chains" value="GA/GB/GC/GD/GE/GF/HA/HB/HC/HD/HE/HF/IA/IB/IC/ID/IE/IF/JA/JB/JC/JD/JE/JF/KA/KB/KC/KD/KE/KF=1-99"/>
</dbReference>
<dbReference type="PDB" id="6N07">
    <property type="method" value="EM"/>
    <property type="resolution" value="3.60 A"/>
    <property type="chains" value="GA/GB/GC/GD/GE/GF/HA/HB/HC/HD/HE/HF/IA/IB/IC/ID/IE/IF/JA/JB/JC/JD/JE/JF/KA/KB/KC/KD/KE/KF=1-99"/>
</dbReference>
<dbReference type="PDB" id="6N09">
    <property type="method" value="EM"/>
    <property type="resolution" value="3.50 A"/>
    <property type="chains" value="GA/GB/GC/GD/GE/GF/HA/HB/HC/HD/HE/HF/IA/IB/IC/ID/IE/IF/JA/JB/JC/JD/JE/JF/KA/KB/KC/KD/KE/KF=1-99"/>
</dbReference>
<dbReference type="PDB" id="6N0F">
    <property type="method" value="EM"/>
    <property type="resolution" value="3.90 A"/>
    <property type="chains" value="GA/GB/GC/GD/GE/GF/HA/HB/HC/HD/HE/HF/IA/IB/IC/ID/IE/IF/JA/JB/JC/JD/JE/JF/KA/KB/KC/KD/KE/KF=1-99"/>
</dbReference>
<dbReference type="PDB" id="6N0G">
    <property type="method" value="EM"/>
    <property type="resolution" value="3.60 A"/>
    <property type="chains" value="GA/GB/GC/GD/GE/GF/HA/HB/HC/HD/HE/HF/IA/IB/IC/ID/IE/IF/JA/JB/JC/JD/JE/JF/KA/KB/KC/KD/KE/KF=1-99"/>
</dbReference>
<dbReference type="PDB" id="6NER">
    <property type="method" value="X-ray"/>
    <property type="resolution" value="3.59 A"/>
    <property type="chains" value="A/B/C/D/E/F/G/H/I/J/K/L/M/N/O/P/Q/R/S/T/U/V/W/X/Y/Z/a/b/c/d=1-99"/>
</dbReference>
<dbReference type="PDB" id="6NLU">
    <property type="method" value="X-ray"/>
    <property type="resolution" value="1.61 A"/>
    <property type="chains" value="A/B=2-99"/>
</dbReference>
<dbReference type="PDBsum" id="5DJB"/>
<dbReference type="PDBsum" id="5V74"/>
<dbReference type="PDBsum" id="6MZU"/>
<dbReference type="PDBsum" id="6MZV"/>
<dbReference type="PDBsum" id="6MZX"/>
<dbReference type="PDBsum" id="6MZY"/>
<dbReference type="PDBsum" id="6N06"/>
<dbReference type="PDBsum" id="6N07"/>
<dbReference type="PDBsum" id="6N09"/>
<dbReference type="PDBsum" id="6N0F"/>
<dbReference type="PDBsum" id="6N0G"/>
<dbReference type="PDBsum" id="6NER"/>
<dbReference type="PDBsum" id="6NLU"/>
<dbReference type="EMDB" id="EMD-9307"/>
<dbReference type="EMDB" id="EMD-9308"/>
<dbReference type="EMDB" id="EMD-9309"/>
<dbReference type="EMDB" id="EMD-9310"/>
<dbReference type="EMDB" id="EMD-9311"/>
<dbReference type="EMDB" id="EMD-9312"/>
<dbReference type="EMDB" id="EMD-9313"/>
<dbReference type="EMDB" id="EMD-9314"/>
<dbReference type="EMDB" id="EMD-9315"/>
<dbReference type="SMR" id="D0LID5"/>
<dbReference type="IntAct" id="D0LID5">
    <property type="interactions" value="4"/>
</dbReference>
<dbReference type="STRING" id="502025.Hoch_5815"/>
<dbReference type="KEGG" id="hoh:Hoch_5815"/>
<dbReference type="eggNOG" id="COG4577">
    <property type="taxonomic scope" value="Bacteria"/>
</dbReference>
<dbReference type="HOGENOM" id="CLU_064903_5_3_7"/>
<dbReference type="OrthoDB" id="9812608at2"/>
<dbReference type="Proteomes" id="UP000001880">
    <property type="component" value="Chromosome"/>
</dbReference>
<dbReference type="GO" id="GO:0031469">
    <property type="term" value="C:bacterial microcompartment"/>
    <property type="evidence" value="ECO:0007669"/>
    <property type="project" value="UniProtKB-SubCell"/>
</dbReference>
<dbReference type="CDD" id="cd07045">
    <property type="entry name" value="BMC_CcmK_like"/>
    <property type="match status" value="1"/>
</dbReference>
<dbReference type="Gene3D" id="3.30.70.1710">
    <property type="match status" value="1"/>
</dbReference>
<dbReference type="InterPro" id="IPR020808">
    <property type="entry name" value="Bact_microcomp_CS"/>
</dbReference>
<dbReference type="InterPro" id="IPR000249">
    <property type="entry name" value="BMC_dom"/>
</dbReference>
<dbReference type="InterPro" id="IPR050575">
    <property type="entry name" value="BMC_shell"/>
</dbReference>
<dbReference type="InterPro" id="IPR037233">
    <property type="entry name" value="CcmK-like_sf"/>
</dbReference>
<dbReference type="InterPro" id="IPR044872">
    <property type="entry name" value="CcmK/CsoS1_BMC"/>
</dbReference>
<dbReference type="PANTHER" id="PTHR33941:SF11">
    <property type="entry name" value="BACTERIAL MICROCOMPARTMENT SHELL PROTEIN PDUJ"/>
    <property type="match status" value="1"/>
</dbReference>
<dbReference type="PANTHER" id="PTHR33941">
    <property type="entry name" value="PROPANEDIOL UTILIZATION PROTEIN PDUA"/>
    <property type="match status" value="1"/>
</dbReference>
<dbReference type="Pfam" id="PF00936">
    <property type="entry name" value="BMC"/>
    <property type="match status" value="1"/>
</dbReference>
<dbReference type="SMART" id="SM00877">
    <property type="entry name" value="BMC"/>
    <property type="match status" value="1"/>
</dbReference>
<dbReference type="SUPFAM" id="SSF143414">
    <property type="entry name" value="CcmK-like"/>
    <property type="match status" value="1"/>
</dbReference>
<dbReference type="PROSITE" id="PS01139">
    <property type="entry name" value="BMC_1"/>
    <property type="match status" value="1"/>
</dbReference>
<dbReference type="PROSITE" id="PS51930">
    <property type="entry name" value="BMC_2"/>
    <property type="match status" value="1"/>
</dbReference>
<name>BMCH_HALO1</name>
<reference key="1">
    <citation type="journal article" date="2010" name="Stand. Genomic Sci.">
        <title>Complete genome sequence of Haliangium ochraceum type strain (SMP-2).</title>
        <authorList>
            <person name="Ivanova N."/>
            <person name="Daum C."/>
            <person name="Lang E."/>
            <person name="Abt B."/>
            <person name="Kopitz M."/>
            <person name="Saunders E."/>
            <person name="Lapidus A."/>
            <person name="Lucas S."/>
            <person name="Glavina Del Rio T."/>
            <person name="Nolan M."/>
            <person name="Tice H."/>
            <person name="Copeland A."/>
            <person name="Cheng J.F."/>
            <person name="Chen F."/>
            <person name="Bruce D."/>
            <person name="Goodwin L."/>
            <person name="Pitluck S."/>
            <person name="Mavromatis K."/>
            <person name="Pati A."/>
            <person name="Mikhailova N."/>
            <person name="Chen A."/>
            <person name="Palaniappan K."/>
            <person name="Land M."/>
            <person name="Hauser L."/>
            <person name="Chang Y.J."/>
            <person name="Jeffries C.D."/>
            <person name="Detter J.C."/>
            <person name="Brettin T."/>
            <person name="Rohde M."/>
            <person name="Goker M."/>
            <person name="Bristow J."/>
            <person name="Markowitz V."/>
            <person name="Eisen J.A."/>
            <person name="Hugenholtz P."/>
            <person name="Kyrpides N.C."/>
            <person name="Klenk H.P."/>
        </authorList>
    </citation>
    <scope>NUCLEOTIDE SEQUENCE [LARGE SCALE GENOMIC DNA]</scope>
    <source>
        <strain>DSM 14365 / CIP 107738 / JCM 11303 / AJ 13395 / SMP-2</strain>
    </source>
</reference>
<reference key="2">
    <citation type="journal article" date="2014" name="J. Mol. Biol.">
        <title>Assembly of robust bacterial microcompartment shells using building blocks from an organelle of unknown function.</title>
        <authorList>
            <person name="Lassila J.K."/>
            <person name="Bernstein S.L."/>
            <person name="Kinney J.N."/>
            <person name="Axen S.D."/>
            <person name="Kerfeld C.A."/>
        </authorList>
    </citation>
    <scope>EXPRESSION IN E.COLI</scope>
    <scope>SUBCELLULAR LOCATION</scope>
    <scope>DISRUPTION PHENOTYPE</scope>
    <scope>BIOTECHNOLOGY</scope>
</reference>
<reference evidence="10" key="3">
    <citation type="journal article" date="2016" name="Nano Lett.">
        <title>Visualization of Bacterial Microcompartment Facet Assembly Using High-Speed Atomic Force Microscopy.</title>
        <authorList>
            <person name="Sutter M."/>
            <person name="Faulkner M."/>
            <person name="Aussignargues C."/>
            <person name="Paasch B.C."/>
            <person name="Barrett S."/>
            <person name="Kerfeld C.A."/>
            <person name="Liu L.N."/>
        </authorList>
    </citation>
    <scope>X-RAY CRYSTALLOGRAPHY (1.80 ANGSTROMS)</scope>
    <scope>SUBUNIT</scope>
    <scope>MUTAGENESIS OF LYS-28 AND ARG-78</scope>
</reference>
<reference evidence="11" key="4">
    <citation type="journal article" date="2017" name="Science">
        <title>Assembly principles and structure of a 6.5-MDa bacterial microcompartment shell.</title>
        <authorList>
            <person name="Sutter M."/>
            <person name="Greber B."/>
            <person name="Aussignargues C."/>
            <person name="Kerfeld C.A."/>
        </authorList>
    </citation>
    <scope>X-RAY CRYSTALLOGRAPHY (3.51 ANGSTROMS)</scope>
    <scope>STRUCTURE BY ELECTRON MICROSCOPY OF BMC</scope>
    <scope>FUNCTION</scope>
    <scope>SUBUNIT</scope>
    <scope>SUBCELLULAR LOCATION</scope>
    <source>
        <strain>DSM 14365 / CIP 107738 / JCM 11303 / AJ 13395 / SMP-2</strain>
    </source>
</reference>
<reference evidence="20" key="5">
    <citation type="journal article" date="2019" name="ACS Synth. Biol.">
        <title>Structural Characterization of a Synthetic Tandem-Domain Bacterial Microcompartment Shell Protein Capable of Forming Icosahedral Shell Assemblies.</title>
        <authorList>
            <person name="Sutter M."/>
            <person name="McGuire S."/>
            <person name="Ferlez B."/>
            <person name="Kerfeld C.A."/>
        </authorList>
    </citation>
    <scope>X-RAY CRYSTALLOGRAPHY (3.59 ANGSTROMS)</scope>
    <scope>SUBUNIT</scope>
    <scope>SUBCELLULAR LOCATION</scope>
    <scope>BIOTECHNOLOGY</scope>
    <source>
        <strain>DSM 14365 / CIP 107738 / JCM 11303 / AJ 13395 / SMP-2</strain>
    </source>
</reference>
<reference evidence="21" key="6">
    <citation type="journal article" date="2019" name="Metab. Eng.">
        <title>A designed bacterial microcompartment shell with tunable composition and precision cargo loading.</title>
        <authorList>
            <person name="Ferlez B."/>
            <person name="Sutter M."/>
            <person name="Kerfeld C.A."/>
        </authorList>
    </citation>
    <scope>X-RAY CRYSTALLOGRAPHY (1.61 ANGSTROMS) OF 2-99</scope>
    <scope>SUBCELLULAR LOCATION</scope>
    <scope>BIOTECHNOLOGY</scope>
</reference>
<reference evidence="12 13 14 15 16 17 18 19" key="7">
    <citation type="journal article" date="2019" name="Structure">
        <title>The Plasticity of Molecular Interactions Governs Bacterial Microcompartment Shell Assembly.</title>
        <authorList>
            <person name="Greber B.J."/>
            <person name="Sutter M."/>
            <person name="Kerfeld C.A."/>
        </authorList>
    </citation>
    <scope>STRUCTURE BY ELECTRON MICROSCOPY (3.00 ANGSTROMS) OF BMC</scope>
    <scope>FUNCTION</scope>
    <scope>SUBUNIT</scope>
    <scope>SUBCELLULAR LOCATION</scope>
</reference>
<protein>
    <recommendedName>
        <fullName evidence="8">Bacterial microcompartment protein homohexamer</fullName>
        <shortName evidence="8">BMC-H</shortName>
    </recommendedName>
</protein>
<comment type="function">
    <text evidence="4 5">The only hexameric shell protein in this bacterium, it forms the majority of the bacterial microcompartment (BMC) shell. Expression of 5 proteins in E.coli (BMC-H (Hoch_5815), BMC-P (Hoch_5814), and 3 BMC-T (Hoch_5812, Hoch_5816, Hoch_3341)) forms a 40 nm artificial BMC with a molecular mass of 6.5 MDa. There are 60 BMC-H hexamers per BMC. The shell facets are 20-30 Angstroms thick (a single hexamer layer), with 1 of BMC-T trimers protruding to the exterior.</text>
</comment>
<comment type="subunit">
    <text evidence="3 4 5 7 9">Homohexamer with a small central pore (Probable) (PubMed:26617073, PubMed:28642439, PubMed:30833088, PubMed:31075444). When purified protein is examined by atomic force microscopy it dynamically makes uniform patches about 35 Angstroms thick with hexamers in the same orientation (PubMed:26617073). In the BMC the concave side faces outward, with the N- and C-terminii exposed to the cytoplasm (PubMed:28642439).</text>
</comment>
<comment type="subcellular location">
    <subcellularLocation>
        <location evidence="2 4 5 6 7">Bacterial microcompartment</location>
    </subcellularLocation>
</comment>
<comment type="disruption phenotype">
    <text evidence="2">Absolutely required for BMC formation; when deleted from an artificial operon (Hoch_5815, Hoch_5812, Hoch_3341, Hoch_5816, Hoch_4425, Hoch_4426, Hoch_5814) being expressed in E.coli, no BMC shells are made.</text>
</comment>
<comment type="biotechnology">
    <text evidence="2 4 6 7">Artificial BMCs can be made in E.coli by expressing (Hoch_5815, Hoch_5812, Hoch_3341, Hoch_5816, Hoch_4425, Hoch_4426, Hoch_5814) or (BMC-H (Hoch_5815), BMC-P (Hoch_5814), and 3 BMC-T (Hoch_5812, Hoch_5816, Hoch_3341)). Cargo proteins can be targeted to this BMC (PubMed:24631000, PubMed:28642439). Artificial BMCs can be made by duplicating this gene with a 16 residue linker between the copies (making an artificial BMC-T). The shell assembles into balls with holes where the pentameric subunit would be, and can be used as a model to study assembly and permeability (PubMed:30901520). Additional changes to this protein place the N- and C-terminii in the interior of the shell (called CPH). Fusing proteins to the C-terminus of CPH allows targeting of cargo proteins to the lumen of the organelle composed of CPH, BMC-P and BMC-T1 (PubMed:31075444).</text>
</comment>
<comment type="similarity">
    <text evidence="1">Belongs to the bacterial microcompartments protein family.</text>
</comment>
<keyword id="KW-0002">3D-structure</keyword>
<keyword id="KW-1283">Bacterial microcompartment</keyword>
<keyword id="KW-1185">Reference proteome</keyword>
<accession>D0LID5</accession>
<organism>
    <name type="scientific">Haliangium ochraceum (strain DSM 14365 / JCM 11303 / SMP-2)</name>
    <dbReference type="NCBI Taxonomy" id="502025"/>
    <lineage>
        <taxon>Bacteria</taxon>
        <taxon>Pseudomonadati</taxon>
        <taxon>Myxococcota</taxon>
        <taxon>Polyangia</taxon>
        <taxon>Haliangiales</taxon>
        <taxon>Kofleriaceae</taxon>
        <taxon>Haliangium</taxon>
    </lineage>
</organism>